<reference key="1">
    <citation type="journal article" date="2005" name="Proc. Natl. Acad. Sci. U.S.A.">
        <title>The complete genome sequence of Mycobacterium avium subspecies paratuberculosis.</title>
        <authorList>
            <person name="Li L."/>
            <person name="Bannantine J.P."/>
            <person name="Zhang Q."/>
            <person name="Amonsin A."/>
            <person name="May B.J."/>
            <person name="Alt D."/>
            <person name="Banerji N."/>
            <person name="Kanjilal S."/>
            <person name="Kapur V."/>
        </authorList>
    </citation>
    <scope>NUCLEOTIDE SEQUENCE [LARGE SCALE GENOMIC DNA]</scope>
    <source>
        <strain>ATCC BAA-968 / K-10</strain>
    </source>
</reference>
<gene>
    <name evidence="1" type="primary">coaA</name>
    <name type="ordered locus">MAP_2700</name>
</gene>
<proteinExistence type="inferred from homology"/>
<feature type="chain" id="PRO_1000043227" description="Pantothenate kinase">
    <location>
        <begin position="1"/>
        <end position="312"/>
    </location>
</feature>
<feature type="binding site" evidence="1">
    <location>
        <begin position="97"/>
        <end position="104"/>
    </location>
    <ligand>
        <name>ATP</name>
        <dbReference type="ChEBI" id="CHEBI:30616"/>
    </ligand>
</feature>
<name>COAA_MYCPA</name>
<sequence>MPRLSEPSPYVEFDRKQWRALRMSTPLALTEEELVGLRGLGEQIDLLEVEEVYLPLARLIHLQVAARQRLFAATAEFLGEPQQNPDRPVPFVIGVAGSVAVGKSTTARVLQALLARWDHHPRVDLVTTDGFLYPNAELDRRNLMHRKGFPESYNRRALMRFVTSVKSGSDYACAPVYSHLKYDIIPGAKHVVRHPDILILEGLNVLQTGPTLMVSDLFDFGIYVDARIEDIEQWYISRFLAMRSTAFADPESHFHHYAALNDTKAVAAAREIWRSINRPNLVENILPTRPRATLVLRKDADHSINRLRLRKL</sequence>
<dbReference type="EC" id="2.7.1.33" evidence="1"/>
<dbReference type="EMBL" id="AE016958">
    <property type="protein sequence ID" value="AAS05017.1"/>
    <property type="molecule type" value="Genomic_DNA"/>
</dbReference>
<dbReference type="RefSeq" id="WP_003875370.1">
    <property type="nucleotide sequence ID" value="NZ_CP106873.1"/>
</dbReference>
<dbReference type="SMR" id="Q73WG0"/>
<dbReference type="STRING" id="262316.MAP_2700"/>
<dbReference type="GeneID" id="75269029"/>
<dbReference type="KEGG" id="mpa:MAP_2700"/>
<dbReference type="eggNOG" id="COG0572">
    <property type="taxonomic scope" value="Bacteria"/>
</dbReference>
<dbReference type="HOGENOM" id="CLU_053818_1_1_11"/>
<dbReference type="UniPathway" id="UPA00241">
    <property type="reaction ID" value="UER00352"/>
</dbReference>
<dbReference type="Proteomes" id="UP000000580">
    <property type="component" value="Chromosome"/>
</dbReference>
<dbReference type="GO" id="GO:0005737">
    <property type="term" value="C:cytoplasm"/>
    <property type="evidence" value="ECO:0007669"/>
    <property type="project" value="UniProtKB-SubCell"/>
</dbReference>
<dbReference type="GO" id="GO:0005524">
    <property type="term" value="F:ATP binding"/>
    <property type="evidence" value="ECO:0007669"/>
    <property type="project" value="UniProtKB-UniRule"/>
</dbReference>
<dbReference type="GO" id="GO:0004594">
    <property type="term" value="F:pantothenate kinase activity"/>
    <property type="evidence" value="ECO:0007669"/>
    <property type="project" value="UniProtKB-UniRule"/>
</dbReference>
<dbReference type="GO" id="GO:0015937">
    <property type="term" value="P:coenzyme A biosynthetic process"/>
    <property type="evidence" value="ECO:0007669"/>
    <property type="project" value="UniProtKB-UniRule"/>
</dbReference>
<dbReference type="CDD" id="cd02025">
    <property type="entry name" value="PanK"/>
    <property type="match status" value="1"/>
</dbReference>
<dbReference type="FunFam" id="3.40.50.300:FF:000242">
    <property type="entry name" value="Pantothenate kinase"/>
    <property type="match status" value="1"/>
</dbReference>
<dbReference type="Gene3D" id="3.40.50.300">
    <property type="entry name" value="P-loop containing nucleotide triphosphate hydrolases"/>
    <property type="match status" value="1"/>
</dbReference>
<dbReference type="HAMAP" id="MF_00215">
    <property type="entry name" value="Pantothen_kinase_1"/>
    <property type="match status" value="1"/>
</dbReference>
<dbReference type="InterPro" id="IPR027417">
    <property type="entry name" value="P-loop_NTPase"/>
</dbReference>
<dbReference type="InterPro" id="IPR004566">
    <property type="entry name" value="PanK"/>
</dbReference>
<dbReference type="InterPro" id="IPR006083">
    <property type="entry name" value="PRK/URK"/>
</dbReference>
<dbReference type="NCBIfam" id="TIGR00554">
    <property type="entry name" value="panK_bact"/>
    <property type="match status" value="1"/>
</dbReference>
<dbReference type="PANTHER" id="PTHR10285">
    <property type="entry name" value="URIDINE KINASE"/>
    <property type="match status" value="1"/>
</dbReference>
<dbReference type="Pfam" id="PF00485">
    <property type="entry name" value="PRK"/>
    <property type="match status" value="1"/>
</dbReference>
<dbReference type="PIRSF" id="PIRSF000545">
    <property type="entry name" value="Pantothenate_kin"/>
    <property type="match status" value="1"/>
</dbReference>
<dbReference type="SUPFAM" id="SSF52540">
    <property type="entry name" value="P-loop containing nucleoside triphosphate hydrolases"/>
    <property type="match status" value="1"/>
</dbReference>
<protein>
    <recommendedName>
        <fullName evidence="1">Pantothenate kinase</fullName>
        <ecNumber evidence="1">2.7.1.33</ecNumber>
    </recommendedName>
    <alternativeName>
        <fullName evidence="1">Pantothenic acid kinase</fullName>
    </alternativeName>
</protein>
<organism>
    <name type="scientific">Mycolicibacterium paratuberculosis (strain ATCC BAA-968 / K-10)</name>
    <name type="common">Mycobacterium paratuberculosis</name>
    <dbReference type="NCBI Taxonomy" id="262316"/>
    <lineage>
        <taxon>Bacteria</taxon>
        <taxon>Bacillati</taxon>
        <taxon>Actinomycetota</taxon>
        <taxon>Actinomycetes</taxon>
        <taxon>Mycobacteriales</taxon>
        <taxon>Mycobacteriaceae</taxon>
        <taxon>Mycobacterium</taxon>
        <taxon>Mycobacterium avium complex (MAC)</taxon>
    </lineage>
</organism>
<keyword id="KW-0067">ATP-binding</keyword>
<keyword id="KW-0173">Coenzyme A biosynthesis</keyword>
<keyword id="KW-0963">Cytoplasm</keyword>
<keyword id="KW-0418">Kinase</keyword>
<keyword id="KW-0547">Nucleotide-binding</keyword>
<keyword id="KW-1185">Reference proteome</keyword>
<keyword id="KW-0808">Transferase</keyword>
<comment type="catalytic activity">
    <reaction evidence="1">
        <text>(R)-pantothenate + ATP = (R)-4'-phosphopantothenate + ADP + H(+)</text>
        <dbReference type="Rhea" id="RHEA:16373"/>
        <dbReference type="ChEBI" id="CHEBI:10986"/>
        <dbReference type="ChEBI" id="CHEBI:15378"/>
        <dbReference type="ChEBI" id="CHEBI:29032"/>
        <dbReference type="ChEBI" id="CHEBI:30616"/>
        <dbReference type="ChEBI" id="CHEBI:456216"/>
        <dbReference type="EC" id="2.7.1.33"/>
    </reaction>
</comment>
<comment type="pathway">
    <text evidence="1">Cofactor biosynthesis; coenzyme A biosynthesis; CoA from (R)-pantothenate: step 1/5.</text>
</comment>
<comment type="subcellular location">
    <subcellularLocation>
        <location evidence="1">Cytoplasm</location>
    </subcellularLocation>
</comment>
<comment type="similarity">
    <text evidence="1">Belongs to the prokaryotic pantothenate kinase family.</text>
</comment>
<accession>Q73WG0</accession>
<evidence type="ECO:0000255" key="1">
    <source>
        <dbReference type="HAMAP-Rule" id="MF_00215"/>
    </source>
</evidence>